<comment type="function">
    <text evidence="2 3">Acts as a guanine-nucleotide releasing factor (GEF) for RAB8A and RAB37 by promoting the conversion of inactive RAB-GDP to the active form RAB-GTP. GEF activity towards RAB8A may facilitate ciliary trafficking by modulating ciliary intracellular localization of RAB8A (By similarity). GEF activity towards RAB37 maintains autophagic homeostasis and retinal function. Involved in photoreceptor integrity (By similarity). May control cilia formation by regulating actin stress filaments and cell contractility. May be involved in microtubule organization and regulation of transport in primary cilia (By similarity). May play a critical role in spermatogenesis and in intraflagellar transport processes (By similarity).</text>
</comment>
<comment type="subunit">
    <text evidence="2 3">Interacts with PDE6D (By similarity). Interacts with RPGRIP1 (By similarity). Interacts with RPGRIP1L (By similarity). PDE6D, RPGRIP1 and RPGRIP1L may compete for the same binding sites (By similarity). Interacts with NPM1 (By similarity). Interacts with SMC1A and SMC3 (By similarity). Interacts with CEP290 (By similarity). Interacts with WHRN (By similarity). Interacts with SPATA7 (By similarity). Interacts with RAB37 and RAB8A (in GDP-bound forms); functions as GEF for RAB37 and RAB8A (By similarity).</text>
</comment>
<comment type="subcellular location">
    <subcellularLocation>
        <location evidence="2">Golgi apparatus</location>
    </subcellularLocation>
    <subcellularLocation>
        <location evidence="7">Cell projection</location>
        <location evidence="7">Cilium</location>
    </subcellularLocation>
    <subcellularLocation>
        <location evidence="3">Cytoplasm</location>
        <location evidence="3">Cytoskeleton</location>
        <location evidence="3">Cilium basal body</location>
    </subcellularLocation>
    <subcellularLocation>
        <location evidence="3">Cytoplasm</location>
        <location evidence="3">Cytoskeleton</location>
        <location evidence="3">Microtubule organizing center</location>
        <location evidence="3">Centrosome</location>
    </subcellularLocation>
    <subcellularLocation>
        <location evidence="3">Cytoplasm</location>
        <location evidence="3">Cytoskeleton</location>
        <location evidence="3">Cilium axoneme</location>
    </subcellularLocation>
    <subcellularLocation>
        <location evidence="3">Cytoplasm</location>
        <location evidence="3">Cytoskeleton</location>
        <location evidence="3">Flagellum axoneme</location>
    </subcellularLocation>
    <text evidence="3 7">In the retinal photoreceptor cell layer, localizes at the connecting cilium (By similarity). Colocalizes with WHRN in the photoreceptor connecting cilium (By similarity). Colocalizes with CEP290 in the photoreceptor connecting cilium (By similarity). Colocalizes with RPGRIP1 in the photoreceptor connecting cilium (By similarity). Colocalizes with RPGR at the primary cilia of epithelial cells (PubMed:20631154).</text>
</comment>
<comment type="alternative products">
    <event type="alternative splicing"/>
    <isoform>
        <id>Q9N1T2-1</id>
        <name>1</name>
        <sequence type="displayed"/>
    </isoform>
    <isoform>
        <id>Q9N1T2-2</id>
        <name>2</name>
        <sequence type="described" ref="VSP_005545 VSP_005546"/>
    </isoform>
    <isoform>
        <id>Q9N1T2-3</id>
        <name>3</name>
        <sequence type="described" ref="VSP_005544"/>
    </isoform>
    <isoform>
        <id>Q9N1T2-4</id>
        <name>4</name>
        <sequence type="described" ref="VSP_005542 VSP_005543"/>
    </isoform>
</comment>
<comment type="tissue specificity">
    <text evidence="6">Isoform 1 is expressed exclusively in testis. Isoforms 2, 3 and 4 are widely expressed.</text>
</comment>
<comment type="domain">
    <text evidence="2">The RCC1 repeat region mediates interactions with RPGRIP1.</text>
</comment>
<comment type="PTM">
    <text evidence="1">Prenylated.</text>
</comment>
<comment type="disease">
    <text evidence="6">Defects in RPGR are the cause of X-linked progressive retinal atrophy (XLPRA) in the Siberian husky dog. XLPRA is a naturally occurring X-linked retinopathy closely resembling X-linked retinitis pigmentosa (XLRP) in humans.</text>
</comment>
<protein>
    <recommendedName>
        <fullName>X-linked retinitis pigmentosa GTPase regulator</fullName>
    </recommendedName>
</protein>
<keyword id="KW-0025">Alternative splicing</keyword>
<keyword id="KW-0966">Cell projection</keyword>
<keyword id="KW-0969">Cilium</keyword>
<keyword id="KW-0970">Cilium biogenesis/degradation</keyword>
<keyword id="KW-0963">Cytoplasm</keyword>
<keyword id="KW-0206">Cytoskeleton</keyword>
<keyword id="KW-0282">Flagellum</keyword>
<keyword id="KW-0333">Golgi apparatus</keyword>
<keyword id="KW-0344">Guanine-nucleotide releasing factor</keyword>
<keyword id="KW-0449">Lipoprotein</keyword>
<keyword id="KW-0488">Methylation</keyword>
<keyword id="KW-0597">Phosphoprotein</keyword>
<keyword id="KW-0636">Prenylation</keyword>
<keyword id="KW-1185">Reference proteome</keyword>
<keyword id="KW-0677">Repeat</keyword>
<keyword id="KW-0682">Retinitis pigmentosa</keyword>
<keyword id="KW-0716">Sensory transduction</keyword>
<keyword id="KW-0844">Vision</keyword>
<feature type="chain" id="PRO_0000206637" description="X-linked retinitis pigmentosa GTPase regulator">
    <location>
        <begin position="1"/>
        <end position="1000"/>
    </location>
</feature>
<feature type="propeptide" id="PRO_0000370843" description="Removed in mature form" evidence="4">
    <location>
        <begin position="1001"/>
        <end position="1003"/>
    </location>
</feature>
<feature type="repeat" description="RCC1 1">
    <location>
        <begin position="54"/>
        <end position="105"/>
    </location>
</feature>
<feature type="repeat" description="RCC1 2">
    <location>
        <begin position="106"/>
        <end position="158"/>
    </location>
</feature>
<feature type="repeat" description="RCC1 3">
    <location>
        <begin position="159"/>
        <end position="208"/>
    </location>
</feature>
<feature type="repeat" description="RCC1 4">
    <location>
        <begin position="209"/>
        <end position="261"/>
    </location>
</feature>
<feature type="repeat" description="RCC1 5">
    <location>
        <begin position="262"/>
        <end position="313"/>
    </location>
</feature>
<feature type="repeat" description="RCC1 6">
    <location>
        <begin position="314"/>
        <end position="367"/>
    </location>
</feature>
<feature type="region of interest" description="Disordered" evidence="5">
    <location>
        <begin position="460"/>
        <end position="495"/>
    </location>
</feature>
<feature type="region of interest" description="Disordered" evidence="5">
    <location>
        <begin position="625"/>
        <end position="657"/>
    </location>
</feature>
<feature type="region of interest" description="Disordered" evidence="5">
    <location>
        <begin position="691"/>
        <end position="760"/>
    </location>
</feature>
<feature type="region of interest" description="Disordered" evidence="5">
    <location>
        <begin position="794"/>
        <end position="932"/>
    </location>
</feature>
<feature type="region of interest" description="Disordered" evidence="5">
    <location>
        <begin position="968"/>
        <end position="1003"/>
    </location>
</feature>
<feature type="compositionally biased region" description="Basic and acidic residues" evidence="5">
    <location>
        <begin position="472"/>
        <end position="485"/>
    </location>
</feature>
<feature type="compositionally biased region" description="Polar residues" evidence="5">
    <location>
        <begin position="486"/>
        <end position="495"/>
    </location>
</feature>
<feature type="compositionally biased region" description="Basic and acidic residues" evidence="5">
    <location>
        <begin position="693"/>
        <end position="715"/>
    </location>
</feature>
<feature type="compositionally biased region" description="Acidic residues" evidence="5">
    <location>
        <begin position="716"/>
        <end position="726"/>
    </location>
</feature>
<feature type="compositionally biased region" description="Acidic residues" evidence="5">
    <location>
        <begin position="797"/>
        <end position="821"/>
    </location>
</feature>
<feature type="compositionally biased region" description="Basic and acidic residues" evidence="5">
    <location>
        <begin position="827"/>
        <end position="848"/>
    </location>
</feature>
<feature type="compositionally biased region" description="Acidic residues" evidence="5">
    <location>
        <begin position="849"/>
        <end position="867"/>
    </location>
</feature>
<feature type="compositionally biased region" description="Basic and acidic residues" evidence="5">
    <location>
        <begin position="882"/>
        <end position="896"/>
    </location>
</feature>
<feature type="compositionally biased region" description="Low complexity" evidence="5">
    <location>
        <begin position="913"/>
        <end position="924"/>
    </location>
</feature>
<feature type="compositionally biased region" description="Polar residues" evidence="5">
    <location>
        <begin position="978"/>
        <end position="989"/>
    </location>
</feature>
<feature type="modified residue" description="Phosphoserine" evidence="2">
    <location>
        <position position="418"/>
    </location>
</feature>
<feature type="modified residue" description="Phosphoserine" evidence="2">
    <location>
        <position position="520"/>
    </location>
</feature>
<feature type="modified residue" description="Cysteine methyl ester" evidence="4">
    <location>
        <position position="1000"/>
    </location>
</feature>
<feature type="lipid moiety-binding region" description="S-geranylgeranyl cysteine" evidence="4">
    <location>
        <position position="1000"/>
    </location>
</feature>
<feature type="splice variant" id="VSP_005542" description="In isoform 4." evidence="8">
    <original>E</original>
    <variation>V</variation>
    <location>
        <position position="416"/>
    </location>
</feature>
<feature type="splice variant" id="VSP_005543" description="In isoform 4." evidence="8">
    <location>
        <begin position="417"/>
        <end position="1003"/>
    </location>
</feature>
<feature type="splice variant" id="VSP_005544" description="In isoform 3." evidence="8">
    <location>
        <begin position="527"/>
        <end position="846"/>
    </location>
</feature>
<feature type="splice variant" id="VSP_005545" description="In isoform 2." evidence="8">
    <original>DHEFSEDEEPEDMAEELDEDLESKKNVPADVASDNSLKKDETTKQEKRAICEYNENPKGNMHYHAKSSSSEV</original>
    <variation>VSEGKGKAGGGGEGIQREGDSGVEQRQSEEGQEEEDKRGGEMEGLAKGEKNLEEEEAQEQREREQGHRKKKK</variation>
    <location>
        <begin position="847"/>
        <end position="918"/>
    </location>
</feature>
<feature type="splice variant" id="VSP_005546" description="In isoform 2." evidence="8">
    <location>
        <begin position="919"/>
        <end position="1003"/>
    </location>
</feature>
<feature type="sequence conflict" description="In Ref. 1; AAF73143." evidence="8" ref="1">
    <original>V</original>
    <variation>M</variation>
    <location>
        <position position="685"/>
    </location>
</feature>
<sequence>MGEPEEVMPGSGAVFTFGKTQFAENIPSKFWFRNDVPTFLSCGDEHTAVVTGNNKLYMFGSNNWGQLGLGSKSTVSKPTCVKALKPEKVKFAACGRNHTLVSTEGGKVYAAGGNNEGQLGLGDTEERSTFHLISFFTSQRKIKQLSAGSNTSAALTEDGELFMWGDNSEGQIGLENVTNVCVPQQVTVGKPISWISCGYYHSAFVTTEGQLYTFGEPECGKLGLPNQLLVNHRMPQPVPGIPGKVVQVACGGGHTVVLTEKAVYTFGLGQFGQLGLGTFLFETSVPKAIEHIKDQKISFIACGENHTALITDMGLMYTFGDGRHGKLGLGLENSTNQFIPTLCSNFLRFIVQLVSCGGCHTLVFATPRLGGTEEMELKEINKSCFSAATSLSLSNLSSGIVLHQTLSARVRRREREKSPDSFQMTRTLPPIDGIPMPPVCFSPSPIPFYMAASNWSGKMTPEKEGLTQPEPDYFRDNMAKGKETDNSSATDSESLGETTDVLNMTHMMSLNSNDKSLKLSPIDKQKKQETIEKLKQHTAHFGNDDSKGCASEEMSKTVKEGKAYKQLLAKGIYMTQAAMTMEAFSDEDIGNDSGQPGPRADTHAEGVQRKIFSCESKHGLYPPDFKAIAKESDGGQSQKDPEAEETVSEKENELAEMAGLQARRQSEENLRNINMFFDDLPNRDVNIEDEESKDFVKDSRRNKQDVIFDSERESIEEPDSYLEGESESQQGTTDGFEQPESVEFSSGEKEDDDEVETDQNLWYSRKFIEQGHKEETEHILSKFMAKYDFKCDHLSEIPEEQEGAEDSEGSGIEEQEVEANENVEVPAGKEEKEIEILSDDLTDRAEDHEFSEDEEPEDMAEELDEDLESKKNVPADVASDNSLKKDETTKQEKRAICEYNENPKGNMHYHAKSSSSEVLNDSESTPNKDVKKSKKIFLFKRMSLMSQKSMQSNNEPLPEIKPIGDQIAFKGNKKDANQNHMGQNHQDTSPPDMERRSKSCTIL</sequence>
<reference key="1">
    <citation type="journal article" date="2000" name="Hum. Mol. Genet.">
        <title>Mapping of X-linked progressive retinal atrophy (XLPRA), the canine homolog of retinitis pigmentosa 3 (RP3).</title>
        <authorList>
            <person name="Zeiss C.J."/>
            <person name="Ray K."/>
            <person name="Acland G.M."/>
            <person name="Aguirre G.D."/>
        </authorList>
    </citation>
    <scope>NUCLEOTIDE SEQUENCE [MRNA]</scope>
    <scope>ALTERNATIVE SPLICING</scope>
    <scope>TISSUE SPECIFICITY</scope>
</reference>
<reference key="2">
    <citation type="journal article" date="2010" name="Hum. Mol. Genet.">
        <title>Interaction of retinitis pigmentosa GTPase regulator (RPGR) with RAB8A GTPase: implications for cilia dysfunction and photoreceptor degeneration.</title>
        <authorList>
            <person name="Murga-Zamalloa C.A."/>
            <person name="Atkins S.J."/>
            <person name="Peranen J."/>
            <person name="Swaroop A."/>
            <person name="Khanna H."/>
        </authorList>
    </citation>
    <scope>SUBCELLULAR LOCATION</scope>
</reference>
<accession>Q9N1T2</accession>
<accession>Q9N1T3</accession>
<accession>Q9N1T4</accession>
<accession>Q9N1T5</accession>
<dbReference type="EMBL" id="AF148798">
    <property type="protein sequence ID" value="AAF73141.1"/>
    <property type="molecule type" value="mRNA"/>
</dbReference>
<dbReference type="EMBL" id="AF148799">
    <property type="protein sequence ID" value="AAF73142.1"/>
    <property type="molecule type" value="mRNA"/>
</dbReference>
<dbReference type="EMBL" id="AF148800">
    <property type="protein sequence ID" value="AAF73143.1"/>
    <property type="molecule type" value="mRNA"/>
</dbReference>
<dbReference type="EMBL" id="AF148801">
    <property type="protein sequence ID" value="AAF73144.1"/>
    <property type="molecule type" value="mRNA"/>
</dbReference>
<dbReference type="RefSeq" id="NP_001003126.1">
    <property type="nucleotide sequence ID" value="NM_001003126.1"/>
</dbReference>
<dbReference type="SMR" id="Q9N1T2"/>
<dbReference type="FunCoup" id="Q9N1T2">
    <property type="interactions" value="37"/>
</dbReference>
<dbReference type="STRING" id="9615.ENSCAFP00000037530"/>
<dbReference type="PaxDb" id="9615-ENSCAFP00000037530"/>
<dbReference type="Ensembl" id="ENSCAFT00000022229.6">
    <molecule id="Q9N1T2-3"/>
    <property type="protein sequence ID" value="ENSCAFP00000020642.5"/>
    <property type="gene ID" value="ENSCAFG00000014003.7"/>
</dbReference>
<dbReference type="Ensembl" id="ENSCAFT00030020227.1">
    <molecule id="Q9N1T2-3"/>
    <property type="protein sequence ID" value="ENSCAFP00030017637.1"/>
    <property type="gene ID" value="ENSCAFG00030010611.1"/>
</dbReference>
<dbReference type="Ensembl" id="ENSCAFT00040032553.1">
    <molecule id="Q9N1T2-3"/>
    <property type="protein sequence ID" value="ENSCAFP00040028323.1"/>
    <property type="gene ID" value="ENSCAFG00040016922.1"/>
</dbReference>
<dbReference type="InParanoid" id="Q9N1T2"/>
<dbReference type="OrthoDB" id="10253607at2759"/>
<dbReference type="Proteomes" id="UP000002254">
    <property type="component" value="Chromosome X"/>
</dbReference>
<dbReference type="Proteomes" id="UP000694429">
    <property type="component" value="Chromosome X"/>
</dbReference>
<dbReference type="Proteomes" id="UP000694542">
    <property type="component" value="Chromosome X"/>
</dbReference>
<dbReference type="Proteomes" id="UP000805418">
    <property type="component" value="Unplaced"/>
</dbReference>
<dbReference type="GO" id="GO:0005813">
    <property type="term" value="C:centrosome"/>
    <property type="evidence" value="ECO:0000250"/>
    <property type="project" value="UniProtKB"/>
</dbReference>
<dbReference type="GO" id="GO:0036064">
    <property type="term" value="C:ciliary basal body"/>
    <property type="evidence" value="ECO:0000250"/>
    <property type="project" value="UniProtKB"/>
</dbReference>
<dbReference type="GO" id="GO:0005929">
    <property type="term" value="C:cilium"/>
    <property type="evidence" value="ECO:0000314"/>
    <property type="project" value="UniProtKB"/>
</dbReference>
<dbReference type="GO" id="GO:0005794">
    <property type="term" value="C:Golgi apparatus"/>
    <property type="evidence" value="ECO:0000250"/>
    <property type="project" value="UniProtKB"/>
</dbReference>
<dbReference type="GO" id="GO:0032391">
    <property type="term" value="C:photoreceptor connecting cilium"/>
    <property type="evidence" value="ECO:0000250"/>
    <property type="project" value="UniProtKB"/>
</dbReference>
<dbReference type="GO" id="GO:0036126">
    <property type="term" value="C:sperm flagellum"/>
    <property type="evidence" value="ECO:0000250"/>
    <property type="project" value="UniProtKB"/>
</dbReference>
<dbReference type="GO" id="GO:0005085">
    <property type="term" value="F:guanyl-nucleotide exchange factor activity"/>
    <property type="evidence" value="ECO:0000250"/>
    <property type="project" value="UniProtKB"/>
</dbReference>
<dbReference type="GO" id="GO:0060271">
    <property type="term" value="P:cilium assembly"/>
    <property type="evidence" value="ECO:0000250"/>
    <property type="project" value="UniProtKB"/>
</dbReference>
<dbReference type="GO" id="GO:0042462">
    <property type="term" value="P:eye photoreceptor cell development"/>
    <property type="evidence" value="ECO:0000250"/>
    <property type="project" value="UniProtKB"/>
</dbReference>
<dbReference type="GO" id="GO:0042073">
    <property type="term" value="P:intraciliary transport"/>
    <property type="evidence" value="ECO:0000250"/>
    <property type="project" value="UniProtKB"/>
</dbReference>
<dbReference type="GO" id="GO:0010508">
    <property type="term" value="P:positive regulation of autophagy"/>
    <property type="evidence" value="ECO:0000250"/>
    <property type="project" value="UniProtKB"/>
</dbReference>
<dbReference type="GO" id="GO:0097499">
    <property type="term" value="P:protein localization to non-motile cilium"/>
    <property type="evidence" value="ECO:0000250"/>
    <property type="project" value="UniProtKB"/>
</dbReference>
<dbReference type="GO" id="GO:0007601">
    <property type="term" value="P:visual perception"/>
    <property type="evidence" value="ECO:0000250"/>
    <property type="project" value="UniProtKB"/>
</dbReference>
<dbReference type="FunFam" id="2.130.10.30:FF:000013">
    <property type="entry name" value="Retinitis pigmentosa GTPase regulator isoform 1"/>
    <property type="match status" value="1"/>
</dbReference>
<dbReference type="Gene3D" id="2.130.10.30">
    <property type="entry name" value="Regulator of chromosome condensation 1/beta-lactamase-inhibitor protein II"/>
    <property type="match status" value="1"/>
</dbReference>
<dbReference type="InterPro" id="IPR009091">
    <property type="entry name" value="RCC1/BLIP-II"/>
</dbReference>
<dbReference type="InterPro" id="IPR000408">
    <property type="entry name" value="Reg_chr_condens"/>
</dbReference>
<dbReference type="InterPro" id="IPR051625">
    <property type="entry name" value="Signaling_Regulatory_Domain"/>
</dbReference>
<dbReference type="PANTHER" id="PTHR22872">
    <property type="entry name" value="BTK-BINDING PROTEIN-RELATED"/>
    <property type="match status" value="1"/>
</dbReference>
<dbReference type="PANTHER" id="PTHR22872:SF9">
    <property type="entry name" value="X-LINKED RETINITIS PIGMENTOSA GTPASE REGULATOR"/>
    <property type="match status" value="1"/>
</dbReference>
<dbReference type="Pfam" id="PF00415">
    <property type="entry name" value="RCC1"/>
    <property type="match status" value="1"/>
</dbReference>
<dbReference type="Pfam" id="PF25390">
    <property type="entry name" value="WD40_RLD"/>
    <property type="match status" value="1"/>
</dbReference>
<dbReference type="PRINTS" id="PR00633">
    <property type="entry name" value="RCCNDNSATION"/>
</dbReference>
<dbReference type="SUPFAM" id="SSF50985">
    <property type="entry name" value="RCC1/BLIP-II"/>
    <property type="match status" value="1"/>
</dbReference>
<dbReference type="PROSITE" id="PS00626">
    <property type="entry name" value="RCC1_2"/>
    <property type="match status" value="4"/>
</dbReference>
<dbReference type="PROSITE" id="PS50012">
    <property type="entry name" value="RCC1_3"/>
    <property type="match status" value="6"/>
</dbReference>
<evidence type="ECO:0000250" key="1"/>
<evidence type="ECO:0000250" key="2">
    <source>
        <dbReference type="UniProtKB" id="Q92834"/>
    </source>
</evidence>
<evidence type="ECO:0000250" key="3">
    <source>
        <dbReference type="UniProtKB" id="Q9R0X5"/>
    </source>
</evidence>
<evidence type="ECO:0000255" key="4"/>
<evidence type="ECO:0000256" key="5">
    <source>
        <dbReference type="SAM" id="MobiDB-lite"/>
    </source>
</evidence>
<evidence type="ECO:0000269" key="6">
    <source>
    </source>
</evidence>
<evidence type="ECO:0000269" key="7">
    <source>
    </source>
</evidence>
<evidence type="ECO:0000305" key="8"/>
<name>RPGR_CANLF</name>
<organism>
    <name type="scientific">Canis lupus familiaris</name>
    <name type="common">Dog</name>
    <name type="synonym">Canis familiaris</name>
    <dbReference type="NCBI Taxonomy" id="9615"/>
    <lineage>
        <taxon>Eukaryota</taxon>
        <taxon>Metazoa</taxon>
        <taxon>Chordata</taxon>
        <taxon>Craniata</taxon>
        <taxon>Vertebrata</taxon>
        <taxon>Euteleostomi</taxon>
        <taxon>Mammalia</taxon>
        <taxon>Eutheria</taxon>
        <taxon>Laurasiatheria</taxon>
        <taxon>Carnivora</taxon>
        <taxon>Caniformia</taxon>
        <taxon>Canidae</taxon>
        <taxon>Canis</taxon>
    </lineage>
</organism>
<gene>
    <name type="primary">RPGR</name>
</gene>
<proteinExistence type="evidence at transcript level"/>